<feature type="chain" id="PRO_0000436859" description="Protein PHR1-LIKE 2">
    <location>
        <begin position="1"/>
        <end position="295"/>
    </location>
</feature>
<feature type="domain" description="HTH myb-type" evidence="2">
    <location>
        <begin position="38"/>
        <end position="98"/>
    </location>
</feature>
<feature type="DNA-binding region" description="H-T-H motif" evidence="2">
    <location>
        <begin position="69"/>
        <end position="94"/>
    </location>
</feature>
<feature type="region of interest" description="Disordered" evidence="3">
    <location>
        <begin position="96"/>
        <end position="138"/>
    </location>
</feature>
<feature type="coiled-coil region" evidence="1">
    <location>
        <begin position="141"/>
        <end position="161"/>
    </location>
</feature>
<feature type="short sequence motif" description="LHEQLE" evidence="6">
    <location>
        <begin position="154"/>
        <end position="159"/>
    </location>
</feature>
<feature type="compositionally biased region" description="Basic and acidic residues" evidence="3">
    <location>
        <begin position="99"/>
        <end position="108"/>
    </location>
</feature>
<feature type="compositionally biased region" description="Polar residues" evidence="3">
    <location>
        <begin position="127"/>
        <end position="138"/>
    </location>
</feature>
<feature type="splice variant" id="VSP_058429" description="In isoform 2.">
    <original>E</original>
    <variation>EYGQ</variation>
    <location>
        <position position="159"/>
    </location>
</feature>
<dbReference type="EMBL" id="AB028621">
    <property type="protein sequence ID" value="BAB01353.1"/>
    <property type="status" value="ALT_SEQ"/>
    <property type="molecule type" value="Genomic_DNA"/>
</dbReference>
<dbReference type="EMBL" id="CP002686">
    <property type="protein sequence ID" value="AEE76859.1"/>
    <property type="molecule type" value="Genomic_DNA"/>
</dbReference>
<dbReference type="EMBL" id="CP002686">
    <property type="protein sequence ID" value="AEE76860.1"/>
    <property type="molecule type" value="Genomic_DNA"/>
</dbReference>
<dbReference type="EMBL" id="AY050355">
    <property type="protein sequence ID" value="AAK91372.1"/>
    <property type="molecule type" value="mRNA"/>
</dbReference>
<dbReference type="EMBL" id="AY094046">
    <property type="protein sequence ID" value="AAM16202.1"/>
    <property type="molecule type" value="mRNA"/>
</dbReference>
<dbReference type="EMBL" id="AY088428">
    <property type="protein sequence ID" value="AAM65964.1"/>
    <property type="molecule type" value="mRNA"/>
</dbReference>
<dbReference type="RefSeq" id="NP_566744.1">
    <molecule id="Q94A57-1"/>
    <property type="nucleotide sequence ID" value="NM_113317.5"/>
</dbReference>
<dbReference type="RefSeq" id="NP_974356.1">
    <molecule id="Q94A57-2"/>
    <property type="nucleotide sequence ID" value="NM_202627.1"/>
</dbReference>
<dbReference type="SMR" id="Q94A57"/>
<dbReference type="FunCoup" id="Q94A57">
    <property type="interactions" value="1650"/>
</dbReference>
<dbReference type="IntAct" id="Q94A57">
    <property type="interactions" value="8"/>
</dbReference>
<dbReference type="STRING" id="3702.Q94A57"/>
<dbReference type="PaxDb" id="3702-AT3G24120.2"/>
<dbReference type="ProteomicsDB" id="236727">
    <molecule id="Q94A57-1"/>
</dbReference>
<dbReference type="EnsemblPlants" id="AT3G24120.1">
    <molecule id="Q94A57-1"/>
    <property type="protein sequence ID" value="AT3G24120.1"/>
    <property type="gene ID" value="AT3G24120"/>
</dbReference>
<dbReference type="EnsemblPlants" id="AT3G24120.2">
    <molecule id="Q94A57-2"/>
    <property type="protein sequence ID" value="AT3G24120.2"/>
    <property type="gene ID" value="AT3G24120"/>
</dbReference>
<dbReference type="GeneID" id="821998"/>
<dbReference type="Gramene" id="AT3G24120.1">
    <molecule id="Q94A57-1"/>
    <property type="protein sequence ID" value="AT3G24120.1"/>
    <property type="gene ID" value="AT3G24120"/>
</dbReference>
<dbReference type="Gramene" id="AT3G24120.2">
    <molecule id="Q94A57-2"/>
    <property type="protein sequence ID" value="AT3G24120.2"/>
    <property type="gene ID" value="AT3G24120"/>
</dbReference>
<dbReference type="KEGG" id="ath:AT3G24120"/>
<dbReference type="Araport" id="AT3G24120"/>
<dbReference type="TAIR" id="AT3G24120">
    <property type="gene designation" value="PHL2"/>
</dbReference>
<dbReference type="eggNOG" id="ENOG502QVJ9">
    <property type="taxonomic scope" value="Eukaryota"/>
</dbReference>
<dbReference type="HOGENOM" id="CLU_053944_2_2_1"/>
<dbReference type="InParanoid" id="Q94A57"/>
<dbReference type="OMA" id="EWMMANI"/>
<dbReference type="PhylomeDB" id="Q94A57"/>
<dbReference type="PRO" id="PR:Q94A57"/>
<dbReference type="Proteomes" id="UP000006548">
    <property type="component" value="Chromosome 3"/>
</dbReference>
<dbReference type="ExpressionAtlas" id="Q94A57">
    <property type="expression patterns" value="baseline and differential"/>
</dbReference>
<dbReference type="GO" id="GO:0005634">
    <property type="term" value="C:nucleus"/>
    <property type="evidence" value="ECO:0000314"/>
    <property type="project" value="TAIR"/>
</dbReference>
<dbReference type="GO" id="GO:0003700">
    <property type="term" value="F:DNA-binding transcription factor activity"/>
    <property type="evidence" value="ECO:0000250"/>
    <property type="project" value="TAIR"/>
</dbReference>
<dbReference type="GO" id="GO:0043565">
    <property type="term" value="F:sequence-specific DNA binding"/>
    <property type="evidence" value="ECO:0000314"/>
    <property type="project" value="TAIR"/>
</dbReference>
<dbReference type="GO" id="GO:0000976">
    <property type="term" value="F:transcription cis-regulatory region binding"/>
    <property type="evidence" value="ECO:0000353"/>
    <property type="project" value="TAIR"/>
</dbReference>
<dbReference type="GO" id="GO:0016036">
    <property type="term" value="P:cellular response to phosphate starvation"/>
    <property type="evidence" value="ECO:0000315"/>
    <property type="project" value="TAIR"/>
</dbReference>
<dbReference type="GO" id="GO:0010628">
    <property type="term" value="P:positive regulation of gene expression"/>
    <property type="evidence" value="ECO:0000314"/>
    <property type="project" value="TAIR"/>
</dbReference>
<dbReference type="GO" id="GO:0006355">
    <property type="term" value="P:regulation of DNA-templated transcription"/>
    <property type="evidence" value="ECO:0000304"/>
    <property type="project" value="TAIR"/>
</dbReference>
<dbReference type="FunFam" id="1.10.10.60:FF:000002">
    <property type="entry name" value="Myb family transcription factor"/>
    <property type="match status" value="1"/>
</dbReference>
<dbReference type="Gene3D" id="1.10.10.60">
    <property type="entry name" value="Homeodomain-like"/>
    <property type="match status" value="1"/>
</dbReference>
<dbReference type="InterPro" id="IPR009057">
    <property type="entry name" value="Homeodomain-like_sf"/>
</dbReference>
<dbReference type="InterPro" id="IPR025756">
    <property type="entry name" value="Myb_CC_LHEQLE"/>
</dbReference>
<dbReference type="InterPro" id="IPR017930">
    <property type="entry name" value="Myb_dom"/>
</dbReference>
<dbReference type="InterPro" id="IPR006447">
    <property type="entry name" value="Myb_dom_plants"/>
</dbReference>
<dbReference type="InterPro" id="IPR046955">
    <property type="entry name" value="PHR1-like"/>
</dbReference>
<dbReference type="InterPro" id="IPR001005">
    <property type="entry name" value="SANT/Myb"/>
</dbReference>
<dbReference type="NCBIfam" id="TIGR01557">
    <property type="entry name" value="myb_SHAQKYF"/>
    <property type="match status" value="1"/>
</dbReference>
<dbReference type="PANTHER" id="PTHR31499">
    <property type="entry name" value="MYB FAMILY TRANSCRIPTION FACTOR PHL11"/>
    <property type="match status" value="1"/>
</dbReference>
<dbReference type="PANTHER" id="PTHR31499:SF6">
    <property type="entry name" value="PROTEIN PHR1-LIKE 2"/>
    <property type="match status" value="1"/>
</dbReference>
<dbReference type="Pfam" id="PF14379">
    <property type="entry name" value="Myb_CC_LHEQLE"/>
    <property type="match status" value="1"/>
</dbReference>
<dbReference type="Pfam" id="PF00249">
    <property type="entry name" value="Myb_DNA-binding"/>
    <property type="match status" value="1"/>
</dbReference>
<dbReference type="SUPFAM" id="SSF46689">
    <property type="entry name" value="Homeodomain-like"/>
    <property type="match status" value="1"/>
</dbReference>
<dbReference type="PROSITE" id="PS51294">
    <property type="entry name" value="HTH_MYB"/>
    <property type="match status" value="1"/>
</dbReference>
<protein>
    <recommendedName>
        <fullName evidence="5">Protein PHR1-LIKE 2</fullName>
    </recommendedName>
    <alternativeName>
        <fullName evidence="5">Myb family transcription factor PHL2</fullName>
    </alternativeName>
</protein>
<comment type="function">
    <text evidence="4">Transcriptional activator (PubMed:26586833). Acts redundantly with PHR1 as a key component of the central regulatory system controlling transcriptional responses to Pi starvation (PubMed:26586833). Binds in a sequence-specific manner to phosphate starvation-regulated promoters (PubMed:26586833).</text>
</comment>
<comment type="subunit">
    <text evidence="4">Homo- and heterodimers (PubMed:26586833). Interacts with PHL3, but not with PHR1 (PubMed:26586833).</text>
</comment>
<comment type="subcellular location">
    <subcellularLocation>
        <location evidence="4">Nucleus</location>
    </subcellularLocation>
</comment>
<comment type="alternative products">
    <event type="alternative splicing"/>
    <isoform>
        <id>Q94A57-1</id>
        <name>1</name>
        <sequence type="displayed"/>
    </isoform>
    <isoform>
        <id>Q94A57-2</id>
        <name>2</name>
        <sequence type="described" ref="VSP_058429"/>
    </isoform>
</comment>
<comment type="induction">
    <text evidence="4">Up-regulated in roots by low Pi.</text>
</comment>
<comment type="similarity">
    <text evidence="6">Belongs to the MYB-CC family.</text>
</comment>
<comment type="sequence caution" evidence="6">
    <conflict type="erroneous gene model prediction">
        <sequence resource="EMBL-CDS" id="BAB01353"/>
    </conflict>
</comment>
<accession>Q94A57</accession>
<accession>F4J5D9</accession>
<accession>Q9LRN5</accession>
<organism evidence="8">
    <name type="scientific">Arabidopsis thaliana</name>
    <name type="common">Mouse-ear cress</name>
    <dbReference type="NCBI Taxonomy" id="3702"/>
    <lineage>
        <taxon>Eukaryota</taxon>
        <taxon>Viridiplantae</taxon>
        <taxon>Streptophyta</taxon>
        <taxon>Embryophyta</taxon>
        <taxon>Tracheophyta</taxon>
        <taxon>Spermatophyta</taxon>
        <taxon>Magnoliopsida</taxon>
        <taxon>eudicotyledons</taxon>
        <taxon>Gunneridae</taxon>
        <taxon>Pentapetalae</taxon>
        <taxon>rosids</taxon>
        <taxon>malvids</taxon>
        <taxon>Brassicales</taxon>
        <taxon>Brassicaceae</taxon>
        <taxon>Camelineae</taxon>
        <taxon>Arabidopsis</taxon>
    </lineage>
</organism>
<evidence type="ECO:0000255" key="1"/>
<evidence type="ECO:0000255" key="2">
    <source>
        <dbReference type="PROSITE-ProRule" id="PRU00625"/>
    </source>
</evidence>
<evidence type="ECO:0000256" key="3">
    <source>
        <dbReference type="SAM" id="MobiDB-lite"/>
    </source>
</evidence>
<evidence type="ECO:0000269" key="4">
    <source>
    </source>
</evidence>
<evidence type="ECO:0000303" key="5">
    <source>
    </source>
</evidence>
<evidence type="ECO:0000305" key="6"/>
<evidence type="ECO:0000312" key="7">
    <source>
        <dbReference type="Araport" id="AT3G24120"/>
    </source>
</evidence>
<evidence type="ECO:0000312" key="8">
    <source>
        <dbReference type="EMBL" id="AAK91372.1"/>
    </source>
</evidence>
<evidence type="ECO:0000312" key="9">
    <source>
        <dbReference type="EMBL" id="BAB01353.1"/>
    </source>
</evidence>
<gene>
    <name evidence="5" type="primary">PHL2</name>
    <name evidence="7" type="ordered locus">At3g24120</name>
    <name evidence="9" type="ORF">MUJ8.3</name>
</gene>
<reference key="1">
    <citation type="journal article" date="2000" name="DNA Res.">
        <title>Structural analysis of Arabidopsis thaliana chromosome 3. I. Sequence features of the regions of 4,504,864 bp covered by sixty P1 and TAC clones.</title>
        <authorList>
            <person name="Sato S."/>
            <person name="Nakamura Y."/>
            <person name="Kaneko T."/>
            <person name="Katoh T."/>
            <person name="Asamizu E."/>
            <person name="Tabata S."/>
        </authorList>
    </citation>
    <scope>NUCLEOTIDE SEQUENCE [LARGE SCALE GENOMIC DNA]</scope>
    <source>
        <strain>cv. Columbia</strain>
    </source>
</reference>
<reference key="2">
    <citation type="journal article" date="2017" name="Plant J.">
        <title>Araport11: a complete reannotation of the Arabidopsis thaliana reference genome.</title>
        <authorList>
            <person name="Cheng C.Y."/>
            <person name="Krishnakumar V."/>
            <person name="Chan A.P."/>
            <person name="Thibaud-Nissen F."/>
            <person name="Schobel S."/>
            <person name="Town C.D."/>
        </authorList>
    </citation>
    <scope>GENOME REANNOTATION</scope>
    <source>
        <strain>cv. Columbia</strain>
    </source>
</reference>
<reference key="3">
    <citation type="journal article" date="2003" name="Science">
        <title>Empirical analysis of transcriptional activity in the Arabidopsis genome.</title>
        <authorList>
            <person name="Yamada K."/>
            <person name="Lim J."/>
            <person name="Dale J.M."/>
            <person name="Chen H."/>
            <person name="Shinn P."/>
            <person name="Palm C.J."/>
            <person name="Southwick A.M."/>
            <person name="Wu H.C."/>
            <person name="Kim C.J."/>
            <person name="Nguyen M."/>
            <person name="Pham P.K."/>
            <person name="Cheuk R.F."/>
            <person name="Karlin-Newmann G."/>
            <person name="Liu S.X."/>
            <person name="Lam B."/>
            <person name="Sakano H."/>
            <person name="Wu T."/>
            <person name="Yu G."/>
            <person name="Miranda M."/>
            <person name="Quach H.L."/>
            <person name="Tripp M."/>
            <person name="Chang C.H."/>
            <person name="Lee J.M."/>
            <person name="Toriumi M.J."/>
            <person name="Chan M.M."/>
            <person name="Tang C.C."/>
            <person name="Onodera C.S."/>
            <person name="Deng J.M."/>
            <person name="Akiyama K."/>
            <person name="Ansari Y."/>
            <person name="Arakawa T."/>
            <person name="Banh J."/>
            <person name="Banno F."/>
            <person name="Bowser L."/>
            <person name="Brooks S.Y."/>
            <person name="Carninci P."/>
            <person name="Chao Q."/>
            <person name="Choy N."/>
            <person name="Enju A."/>
            <person name="Goldsmith A.D."/>
            <person name="Gurjal M."/>
            <person name="Hansen N.F."/>
            <person name="Hayashizaki Y."/>
            <person name="Johnson-Hopson C."/>
            <person name="Hsuan V.W."/>
            <person name="Iida K."/>
            <person name="Karnes M."/>
            <person name="Khan S."/>
            <person name="Koesema E."/>
            <person name="Ishida J."/>
            <person name="Jiang P.X."/>
            <person name="Jones T."/>
            <person name="Kawai J."/>
            <person name="Kamiya A."/>
            <person name="Meyers C."/>
            <person name="Nakajima M."/>
            <person name="Narusaka M."/>
            <person name="Seki M."/>
            <person name="Sakurai T."/>
            <person name="Satou M."/>
            <person name="Tamse R."/>
            <person name="Vaysberg M."/>
            <person name="Wallender E.K."/>
            <person name="Wong C."/>
            <person name="Yamamura Y."/>
            <person name="Yuan S."/>
            <person name="Shinozaki K."/>
            <person name="Davis R.W."/>
            <person name="Theologis A."/>
            <person name="Ecker J.R."/>
        </authorList>
    </citation>
    <scope>NUCLEOTIDE SEQUENCE [LARGE SCALE MRNA]</scope>
    <source>
        <strain>cv. Columbia</strain>
    </source>
</reference>
<reference key="4">
    <citation type="submission" date="2002-03" db="EMBL/GenBank/DDBJ databases">
        <title>Full-length cDNA from Arabidopsis thaliana.</title>
        <authorList>
            <person name="Brover V.V."/>
            <person name="Troukhan M.E."/>
            <person name="Alexandrov N.A."/>
            <person name="Lu Y.-P."/>
            <person name="Flavell R.B."/>
            <person name="Feldmann K.A."/>
        </authorList>
    </citation>
    <scope>NUCLEOTIDE SEQUENCE [LARGE SCALE MRNA]</scope>
</reference>
<reference key="5">
    <citation type="journal article" date="2001" name="Genes Dev.">
        <title>A conserved MYB transcription factor involved in phosphate starvation signaling both in vascular plants and in unicellular algae.</title>
        <authorList>
            <person name="Rubio V."/>
            <person name="Linhares F."/>
            <person name="Solano R."/>
            <person name="Martin A.C."/>
            <person name="Iglesias J."/>
            <person name="Leyva A."/>
            <person name="Paz-Ares J."/>
        </authorList>
    </citation>
    <scope>GENE FAMILY</scope>
</reference>
<reference key="6">
    <citation type="journal article" date="2013" name="Plant Signal. Behav.">
        <title>Alternative splicing of Myb-related genes MYR1 and MYR2 may modulate activities through changes in dimerization, localization, or protein folding.</title>
        <authorList>
            <person name="Zhao C."/>
            <person name="Beers E."/>
        </authorList>
    </citation>
    <scope>ALTERNATIVE SPLICING</scope>
</reference>
<reference key="7">
    <citation type="journal article" date="2016" name="Plant Physiol.">
        <title>Arabidopsis PHL2 and PHR1 act redundantly as the key components of the central regulatory system controlling transcriptional responses to phosphate starvation.</title>
        <authorList>
            <person name="Sun L."/>
            <person name="Song L."/>
            <person name="Zhang Y."/>
            <person name="Zheng Z."/>
            <person name="Liu D."/>
        </authorList>
    </citation>
    <scope>FUNCTION</scope>
    <scope>SUBCELLULAR LOCATION</scope>
    <scope>INTERACTION WITH PHL3</scope>
    <scope>SUBUNIT</scope>
    <scope>INDUCTION BY PHOSPHATE</scope>
</reference>
<name>PHL2_ARATH</name>
<proteinExistence type="evidence at protein level"/>
<sequence length="295" mass="32205">MYSAIRSLPLDGGHVGGDYHGPLDGTNLPGDACLVLTTDPKPRLRWTTELHERFVDAVTQLGGPDKATPKTIMRTMGVKGLTLYHLKSHLQKFRLGRQAGKESTENSKDASCVGESQDTGSSSTSSMRMAQQEQNEGYQVTEALRAQMEVQRRLHDQLEVQRRLQLRIEAQGKYLQSILEKACKAFDEQAATFAGLEAAREELSELAIKVSNSSQGTSVPYFDATKMMMMPSLSELAVAIDNKNNITTNCSVESSLTSITHGSSISAASMKKRQRGDNLGVGYESGWIMPSSTIG</sequence>
<keyword id="KW-0025">Alternative splicing</keyword>
<keyword id="KW-0175">Coiled coil</keyword>
<keyword id="KW-0238">DNA-binding</keyword>
<keyword id="KW-0539">Nucleus</keyword>
<keyword id="KW-1185">Reference proteome</keyword>
<keyword id="KW-0804">Transcription</keyword>
<keyword id="KW-0805">Transcription regulation</keyword>